<name>COAD_MYCBT</name>
<accession>C1AG80</accession>
<proteinExistence type="inferred from homology"/>
<feature type="chain" id="PRO_1000123293" description="Phosphopantetheine adenylyltransferase">
    <location>
        <begin position="1"/>
        <end position="161"/>
    </location>
</feature>
<feature type="binding site" evidence="1">
    <location>
        <begin position="9"/>
        <end position="10"/>
    </location>
    <ligand>
        <name>ATP</name>
        <dbReference type="ChEBI" id="CHEBI:30616"/>
    </ligand>
</feature>
<feature type="binding site" evidence="1">
    <location>
        <position position="9"/>
    </location>
    <ligand>
        <name>substrate</name>
    </ligand>
</feature>
<feature type="binding site" evidence="1">
    <location>
        <position position="17"/>
    </location>
    <ligand>
        <name>ATP</name>
        <dbReference type="ChEBI" id="CHEBI:30616"/>
    </ligand>
</feature>
<feature type="binding site" evidence="1">
    <location>
        <position position="41"/>
    </location>
    <ligand>
        <name>substrate</name>
    </ligand>
</feature>
<feature type="binding site" evidence="1">
    <location>
        <position position="73"/>
    </location>
    <ligand>
        <name>substrate</name>
    </ligand>
</feature>
<feature type="binding site" evidence="1">
    <location>
        <position position="87"/>
    </location>
    <ligand>
        <name>substrate</name>
    </ligand>
</feature>
<feature type="binding site" evidence="1">
    <location>
        <begin position="88"/>
        <end position="90"/>
    </location>
    <ligand>
        <name>ATP</name>
        <dbReference type="ChEBI" id="CHEBI:30616"/>
    </ligand>
</feature>
<feature type="binding site" evidence="1">
    <location>
        <position position="98"/>
    </location>
    <ligand>
        <name>ATP</name>
        <dbReference type="ChEBI" id="CHEBI:30616"/>
    </ligand>
</feature>
<feature type="binding site" evidence="1">
    <location>
        <begin position="122"/>
        <end position="128"/>
    </location>
    <ligand>
        <name>ATP</name>
        <dbReference type="ChEBI" id="CHEBI:30616"/>
    </ligand>
</feature>
<feature type="site" description="Transition state stabilizer" evidence="1">
    <location>
        <position position="17"/>
    </location>
</feature>
<protein>
    <recommendedName>
        <fullName evidence="1">Phosphopantetheine adenylyltransferase</fullName>
        <ecNumber evidence="1">2.7.7.3</ecNumber>
    </recommendedName>
    <alternativeName>
        <fullName evidence="1">Dephospho-CoA pyrophosphorylase</fullName>
    </alternativeName>
    <alternativeName>
        <fullName evidence="1">Pantetheine-phosphate adenylyltransferase</fullName>
        <shortName evidence="1">PPAT</shortName>
    </alternativeName>
</protein>
<reference key="1">
    <citation type="journal article" date="2009" name="Vaccine">
        <title>Whole genome sequence analysis of Mycobacterium bovis bacillus Calmette-Guerin (BCG) Tokyo 172: a comparative study of BCG vaccine substrains.</title>
        <authorList>
            <person name="Seki M."/>
            <person name="Honda I."/>
            <person name="Fujita I."/>
            <person name="Yano I."/>
            <person name="Yamamoto S."/>
            <person name="Koyama A."/>
        </authorList>
    </citation>
    <scope>NUCLEOTIDE SEQUENCE [LARGE SCALE GENOMIC DNA]</scope>
    <source>
        <strain>BCG / Tokyo 172 / ATCC 35737 / TMC 1019</strain>
    </source>
</reference>
<keyword id="KW-0067">ATP-binding</keyword>
<keyword id="KW-0173">Coenzyme A biosynthesis</keyword>
<keyword id="KW-0963">Cytoplasm</keyword>
<keyword id="KW-0460">Magnesium</keyword>
<keyword id="KW-0547">Nucleotide-binding</keyword>
<keyword id="KW-0548">Nucleotidyltransferase</keyword>
<keyword id="KW-0808">Transferase</keyword>
<gene>
    <name evidence="1" type="primary">coaD</name>
    <name type="ordered locus">JTY_2981</name>
</gene>
<evidence type="ECO:0000255" key="1">
    <source>
        <dbReference type="HAMAP-Rule" id="MF_00151"/>
    </source>
</evidence>
<dbReference type="EC" id="2.7.7.3" evidence="1"/>
<dbReference type="EMBL" id="AP010918">
    <property type="protein sequence ID" value="BAH27259.1"/>
    <property type="molecule type" value="Genomic_DNA"/>
</dbReference>
<dbReference type="RefSeq" id="WP_003414998.1">
    <property type="nucleotide sequence ID" value="NZ_CP014566.1"/>
</dbReference>
<dbReference type="SMR" id="C1AG80"/>
<dbReference type="GeneID" id="45426954"/>
<dbReference type="KEGG" id="mbt:JTY_2981"/>
<dbReference type="HOGENOM" id="CLU_100149_1_0_11"/>
<dbReference type="UniPathway" id="UPA00241">
    <property type="reaction ID" value="UER00355"/>
</dbReference>
<dbReference type="GO" id="GO:0005737">
    <property type="term" value="C:cytoplasm"/>
    <property type="evidence" value="ECO:0007669"/>
    <property type="project" value="UniProtKB-SubCell"/>
</dbReference>
<dbReference type="GO" id="GO:0005524">
    <property type="term" value="F:ATP binding"/>
    <property type="evidence" value="ECO:0007669"/>
    <property type="project" value="UniProtKB-KW"/>
</dbReference>
<dbReference type="GO" id="GO:0004595">
    <property type="term" value="F:pantetheine-phosphate adenylyltransferase activity"/>
    <property type="evidence" value="ECO:0007669"/>
    <property type="project" value="UniProtKB-UniRule"/>
</dbReference>
<dbReference type="GO" id="GO:0015937">
    <property type="term" value="P:coenzyme A biosynthetic process"/>
    <property type="evidence" value="ECO:0007669"/>
    <property type="project" value="UniProtKB-UniRule"/>
</dbReference>
<dbReference type="CDD" id="cd02163">
    <property type="entry name" value="PPAT"/>
    <property type="match status" value="1"/>
</dbReference>
<dbReference type="FunFam" id="3.40.50.620:FF:000012">
    <property type="entry name" value="Phosphopantetheine adenylyltransferase"/>
    <property type="match status" value="1"/>
</dbReference>
<dbReference type="Gene3D" id="3.40.50.620">
    <property type="entry name" value="HUPs"/>
    <property type="match status" value="1"/>
</dbReference>
<dbReference type="HAMAP" id="MF_00151">
    <property type="entry name" value="PPAT_bact"/>
    <property type="match status" value="1"/>
</dbReference>
<dbReference type="InterPro" id="IPR004821">
    <property type="entry name" value="Cyt_trans-like"/>
</dbReference>
<dbReference type="InterPro" id="IPR001980">
    <property type="entry name" value="PPAT"/>
</dbReference>
<dbReference type="InterPro" id="IPR014729">
    <property type="entry name" value="Rossmann-like_a/b/a_fold"/>
</dbReference>
<dbReference type="NCBIfam" id="TIGR01510">
    <property type="entry name" value="coaD_prev_kdtB"/>
    <property type="match status" value="1"/>
</dbReference>
<dbReference type="NCBIfam" id="TIGR00125">
    <property type="entry name" value="cyt_tran_rel"/>
    <property type="match status" value="1"/>
</dbReference>
<dbReference type="PANTHER" id="PTHR21342">
    <property type="entry name" value="PHOSPHOPANTETHEINE ADENYLYLTRANSFERASE"/>
    <property type="match status" value="1"/>
</dbReference>
<dbReference type="PANTHER" id="PTHR21342:SF1">
    <property type="entry name" value="PHOSPHOPANTETHEINE ADENYLYLTRANSFERASE"/>
    <property type="match status" value="1"/>
</dbReference>
<dbReference type="Pfam" id="PF01467">
    <property type="entry name" value="CTP_transf_like"/>
    <property type="match status" value="1"/>
</dbReference>
<dbReference type="PRINTS" id="PR01020">
    <property type="entry name" value="LPSBIOSNTHSS"/>
</dbReference>
<dbReference type="SUPFAM" id="SSF52374">
    <property type="entry name" value="Nucleotidylyl transferase"/>
    <property type="match status" value="1"/>
</dbReference>
<sequence>MTGAVCPGSFDPVTLGHVDIFERAAAQFDEVVVAILVNPAKTGMFDLDERIAMVKESTTHLPNLRVQVGHGLVVDFVRSCGMTAIVKGLRTGTDFEYELQMAQMNKHIAGVDTFFVATAPRYSFVSSSLAKEVAMLGGDVSELLPEPVNRRLRDRLNTERT</sequence>
<comment type="function">
    <text evidence="1">Reversibly transfers an adenylyl group from ATP to 4'-phosphopantetheine, yielding dephospho-CoA (dPCoA) and pyrophosphate.</text>
</comment>
<comment type="catalytic activity">
    <reaction evidence="1">
        <text>(R)-4'-phosphopantetheine + ATP + H(+) = 3'-dephospho-CoA + diphosphate</text>
        <dbReference type="Rhea" id="RHEA:19801"/>
        <dbReference type="ChEBI" id="CHEBI:15378"/>
        <dbReference type="ChEBI" id="CHEBI:30616"/>
        <dbReference type="ChEBI" id="CHEBI:33019"/>
        <dbReference type="ChEBI" id="CHEBI:57328"/>
        <dbReference type="ChEBI" id="CHEBI:61723"/>
        <dbReference type="EC" id="2.7.7.3"/>
    </reaction>
</comment>
<comment type="cofactor">
    <cofactor evidence="1">
        <name>Mg(2+)</name>
        <dbReference type="ChEBI" id="CHEBI:18420"/>
    </cofactor>
</comment>
<comment type="pathway">
    <text evidence="1">Cofactor biosynthesis; coenzyme A biosynthesis; CoA from (R)-pantothenate: step 4/5.</text>
</comment>
<comment type="subunit">
    <text evidence="1">Homohexamer.</text>
</comment>
<comment type="subcellular location">
    <subcellularLocation>
        <location evidence="1">Cytoplasm</location>
    </subcellularLocation>
</comment>
<comment type="similarity">
    <text evidence="1">Belongs to the bacterial CoaD family.</text>
</comment>
<organism>
    <name type="scientific">Mycobacterium bovis (strain BCG / Tokyo 172 / ATCC 35737 / TMC 1019)</name>
    <dbReference type="NCBI Taxonomy" id="561275"/>
    <lineage>
        <taxon>Bacteria</taxon>
        <taxon>Bacillati</taxon>
        <taxon>Actinomycetota</taxon>
        <taxon>Actinomycetes</taxon>
        <taxon>Mycobacteriales</taxon>
        <taxon>Mycobacteriaceae</taxon>
        <taxon>Mycobacterium</taxon>
        <taxon>Mycobacterium tuberculosis complex</taxon>
    </lineage>
</organism>